<proteinExistence type="evidence at protein level"/>
<accession>Q07322</accession>
<reference key="1">
    <citation type="journal article" date="1993" name="Plant Mol. Biol.">
        <title>cDNA cloning of ECP40, an embryogenic-cell protein in carrot, and its expression during somatic and zygotic embryogenesis.</title>
        <authorList>
            <person name="Kiyosue T."/>
            <person name="Yamaguchi-Shinozaki K."/>
            <person name="Shinozaki K."/>
            <person name="Kamada H."/>
            <person name="Harada H."/>
        </authorList>
    </citation>
    <scope>NUCLEOTIDE SEQUENCE [MRNA]</scope>
    <scope>PARTIAL PROTEIN SEQUENCE</scope>
    <source>
        <strain>cv. Harumakigosun</strain>
    </source>
</reference>
<feature type="chain" id="PRO_0000100043" description="Embryogenic cell protein 40">
    <location>
        <begin position="1"/>
        <end position="306"/>
    </location>
</feature>
<feature type="region of interest" description="Disordered" evidence="1">
    <location>
        <begin position="1"/>
        <end position="57"/>
    </location>
</feature>
<feature type="region of interest" description="Disordered" evidence="1">
    <location>
        <begin position="80"/>
        <end position="171"/>
    </location>
</feature>
<feature type="region of interest" description="Disordered" evidence="1">
    <location>
        <begin position="188"/>
        <end position="306"/>
    </location>
</feature>
<feature type="compositionally biased region" description="Polar residues" evidence="1">
    <location>
        <begin position="12"/>
        <end position="23"/>
    </location>
</feature>
<feature type="compositionally biased region" description="Low complexity" evidence="1">
    <location>
        <begin position="32"/>
        <end position="44"/>
    </location>
</feature>
<feature type="compositionally biased region" description="Gly residues" evidence="1">
    <location>
        <begin position="85"/>
        <end position="119"/>
    </location>
</feature>
<feature type="compositionally biased region" description="Gly residues" evidence="1">
    <location>
        <begin position="127"/>
        <end position="151"/>
    </location>
</feature>
<feature type="compositionally biased region" description="Gly residues" evidence="1">
    <location>
        <begin position="159"/>
        <end position="171"/>
    </location>
</feature>
<feature type="compositionally biased region" description="Low complexity" evidence="1">
    <location>
        <begin position="194"/>
        <end position="204"/>
    </location>
</feature>
<feature type="compositionally biased region" description="Basic and acidic residues" evidence="1">
    <location>
        <begin position="205"/>
        <end position="218"/>
    </location>
</feature>
<feature type="compositionally biased region" description="Basic and acidic residues" evidence="1">
    <location>
        <begin position="243"/>
        <end position="259"/>
    </location>
</feature>
<feature type="compositionally biased region" description="Low complexity" evidence="1">
    <location>
        <begin position="260"/>
        <end position="278"/>
    </location>
</feature>
<feature type="compositionally biased region" description="Basic and acidic residues" evidence="1">
    <location>
        <begin position="279"/>
        <end position="298"/>
    </location>
</feature>
<sequence>MADLRDEKGNPIQLTDQHGNPVQLTDEYGNPVHITGVATTGATTGHHDHGVGGASHGGVGSTGLGGVAGAAGLAGATAAAATHGGSHGGTGTHGVGPTGVGAAHGGTGTTTGLGTGTGTTGQTHGMGPTGIGGTHGVGSTGIGGAHGGTGVLGQTHGMGPTGTGAAHGGLGTGQSGLGSSYATHGGLGTGIGTGSAPASAGSHSHAPEKKTALGEQLHRSNSSSSSSEDDGQGGRRKKGFTTKIKEKLGGGKHKKDEHTTVATTKTTTAAHPGGAAVAVEHHEHEKKSMLDKIKDKLPGHHSPTSH</sequence>
<dbReference type="EMBL" id="X61914">
    <property type="protein sequence ID" value="CAA43906.1"/>
    <property type="molecule type" value="mRNA"/>
</dbReference>
<dbReference type="PIR" id="S33538">
    <property type="entry name" value="S33538"/>
</dbReference>
<dbReference type="GO" id="GO:0005829">
    <property type="term" value="C:cytosol"/>
    <property type="evidence" value="ECO:0007669"/>
    <property type="project" value="TreeGrafter"/>
</dbReference>
<dbReference type="GO" id="GO:0009631">
    <property type="term" value="P:cold acclimation"/>
    <property type="evidence" value="ECO:0007669"/>
    <property type="project" value="TreeGrafter"/>
</dbReference>
<dbReference type="GO" id="GO:0009737">
    <property type="term" value="P:response to abscisic acid"/>
    <property type="evidence" value="ECO:0007669"/>
    <property type="project" value="TreeGrafter"/>
</dbReference>
<dbReference type="GO" id="GO:0009414">
    <property type="term" value="P:response to water deprivation"/>
    <property type="evidence" value="ECO:0007669"/>
    <property type="project" value="TreeGrafter"/>
</dbReference>
<dbReference type="InterPro" id="IPR000167">
    <property type="entry name" value="Dehydrin"/>
</dbReference>
<dbReference type="InterPro" id="IPR030513">
    <property type="entry name" value="Dehydrin_CS"/>
</dbReference>
<dbReference type="PANTHER" id="PTHR33346:SF5">
    <property type="entry name" value="DEHYDRIN LEA-RELATED"/>
    <property type="match status" value="1"/>
</dbReference>
<dbReference type="PANTHER" id="PTHR33346">
    <property type="entry name" value="DEHYDRIN XERO 2-RELATED"/>
    <property type="match status" value="1"/>
</dbReference>
<dbReference type="Pfam" id="PF00257">
    <property type="entry name" value="Dehydrin"/>
    <property type="match status" value="1"/>
</dbReference>
<dbReference type="PROSITE" id="PS00315">
    <property type="entry name" value="DEHYDRIN_1"/>
    <property type="match status" value="1"/>
</dbReference>
<dbReference type="PROSITE" id="PS00823">
    <property type="entry name" value="DEHYDRIN_2"/>
    <property type="match status" value="1"/>
</dbReference>
<organism>
    <name type="scientific">Daucus carota</name>
    <name type="common">Wild carrot</name>
    <dbReference type="NCBI Taxonomy" id="4039"/>
    <lineage>
        <taxon>Eukaryota</taxon>
        <taxon>Viridiplantae</taxon>
        <taxon>Streptophyta</taxon>
        <taxon>Embryophyta</taxon>
        <taxon>Tracheophyta</taxon>
        <taxon>Spermatophyta</taxon>
        <taxon>Magnoliopsida</taxon>
        <taxon>eudicotyledons</taxon>
        <taxon>Gunneridae</taxon>
        <taxon>Pentapetalae</taxon>
        <taxon>asterids</taxon>
        <taxon>campanulids</taxon>
        <taxon>Apiales</taxon>
        <taxon>Apiaceae</taxon>
        <taxon>Apioideae</taxon>
        <taxon>Scandiceae</taxon>
        <taxon>Daucinae</taxon>
        <taxon>Daucus</taxon>
        <taxon>Daucus sect. Daucus</taxon>
    </lineage>
</organism>
<evidence type="ECO:0000256" key="1">
    <source>
        <dbReference type="SAM" id="MobiDB-lite"/>
    </source>
</evidence>
<evidence type="ECO:0000305" key="2"/>
<name>ECP40_DAUCA</name>
<protein>
    <recommendedName>
        <fullName>Embryogenic cell protein 40</fullName>
        <shortName>ECP40</shortName>
    </recommendedName>
</protein>
<keyword id="KW-0903">Direct protein sequencing</keyword>
<comment type="developmental stage">
    <text>Found during somatic and zygotic embryogenesis.</text>
</comment>
<comment type="similarity">
    <text evidence="2">Belongs to the plant dehydrin family.</text>
</comment>
<gene>
    <name type="primary">ECP40</name>
</gene>